<sequence>MTALSRLAATVEARKGADPESSWTAKLFAKGPEKCAEKFGEEAVEAIIAAVKNDRANLVYEAADVLYHLTVMLAARDVSLDEVLAELDRRAGTSGIAEKAARG</sequence>
<comment type="catalytic activity">
    <reaction>
        <text>1-(5-phospho-beta-D-ribosyl)-ATP + H2O = 1-(5-phospho-beta-D-ribosyl)-5'-AMP + diphosphate + H(+)</text>
        <dbReference type="Rhea" id="RHEA:22828"/>
        <dbReference type="ChEBI" id="CHEBI:15377"/>
        <dbReference type="ChEBI" id="CHEBI:15378"/>
        <dbReference type="ChEBI" id="CHEBI:33019"/>
        <dbReference type="ChEBI" id="CHEBI:59457"/>
        <dbReference type="ChEBI" id="CHEBI:73183"/>
        <dbReference type="EC" id="3.6.1.31"/>
    </reaction>
</comment>
<comment type="pathway">
    <text>Amino-acid biosynthesis; L-histidine biosynthesis; L-histidine from 5-phospho-alpha-D-ribose 1-diphosphate: step 2/9.</text>
</comment>
<comment type="subcellular location">
    <subcellularLocation>
        <location evidence="1">Cytoplasm</location>
    </subcellularLocation>
</comment>
<comment type="similarity">
    <text evidence="2">Belongs to the PRA-PH family.</text>
</comment>
<proteinExistence type="inferred from homology"/>
<feature type="chain" id="PRO_0000136383" description="Phosphoribosyl-ATP pyrophosphatase">
    <location>
        <begin position="1"/>
        <end position="103"/>
    </location>
</feature>
<keyword id="KW-0028">Amino-acid biosynthesis</keyword>
<keyword id="KW-0067">ATP-binding</keyword>
<keyword id="KW-0963">Cytoplasm</keyword>
<keyword id="KW-0368">Histidine biosynthesis</keyword>
<keyword id="KW-0378">Hydrolase</keyword>
<keyword id="KW-0547">Nucleotide-binding</keyword>
<keyword id="KW-1185">Reference proteome</keyword>
<organism>
    <name type="scientific">Rhodobacter capsulatus (strain ATCC BAA-309 / NBRC 16581 / SB1003)</name>
    <dbReference type="NCBI Taxonomy" id="272942"/>
    <lineage>
        <taxon>Bacteria</taxon>
        <taxon>Pseudomonadati</taxon>
        <taxon>Pseudomonadota</taxon>
        <taxon>Alphaproteobacteria</taxon>
        <taxon>Rhodobacterales</taxon>
        <taxon>Rhodobacter group</taxon>
        <taxon>Rhodobacter</taxon>
    </lineage>
</organism>
<protein>
    <recommendedName>
        <fullName>Phosphoribosyl-ATP pyrophosphatase</fullName>
        <shortName>PRA-PH</shortName>
        <ecNumber>3.6.1.31</ecNumber>
    </recommendedName>
</protein>
<name>HIS2_RHOCB</name>
<accession>O30723</accession>
<accession>D5ARN9</accession>
<evidence type="ECO:0000250" key="1"/>
<evidence type="ECO:0000305" key="2"/>
<dbReference type="EC" id="3.6.1.31"/>
<dbReference type="EMBL" id="AF016223">
    <property type="protein sequence ID" value="AAC46104.1"/>
    <property type="molecule type" value="Genomic_DNA"/>
</dbReference>
<dbReference type="EMBL" id="CP001312">
    <property type="protein sequence ID" value="ADE84910.1"/>
    <property type="molecule type" value="Genomic_DNA"/>
</dbReference>
<dbReference type="RefSeq" id="WP_013066889.1">
    <property type="nucleotide sequence ID" value="NC_014034.1"/>
</dbReference>
<dbReference type="SMR" id="O30723"/>
<dbReference type="STRING" id="272942.RCAP_rcc01152"/>
<dbReference type="GeneID" id="31490065"/>
<dbReference type="KEGG" id="rcp:RCAP_rcc01152"/>
<dbReference type="eggNOG" id="COG0140">
    <property type="taxonomic scope" value="Bacteria"/>
</dbReference>
<dbReference type="HOGENOM" id="CLU_123337_1_1_5"/>
<dbReference type="OrthoDB" id="9814738at2"/>
<dbReference type="UniPathway" id="UPA00031">
    <property type="reaction ID" value="UER00007"/>
</dbReference>
<dbReference type="Proteomes" id="UP000002361">
    <property type="component" value="Chromosome"/>
</dbReference>
<dbReference type="GO" id="GO:0005737">
    <property type="term" value="C:cytoplasm"/>
    <property type="evidence" value="ECO:0007669"/>
    <property type="project" value="UniProtKB-SubCell"/>
</dbReference>
<dbReference type="GO" id="GO:0005524">
    <property type="term" value="F:ATP binding"/>
    <property type="evidence" value="ECO:0007669"/>
    <property type="project" value="UniProtKB-KW"/>
</dbReference>
<dbReference type="GO" id="GO:0004636">
    <property type="term" value="F:phosphoribosyl-ATP diphosphatase activity"/>
    <property type="evidence" value="ECO:0007669"/>
    <property type="project" value="UniProtKB-UniRule"/>
</dbReference>
<dbReference type="GO" id="GO:0000105">
    <property type="term" value="P:L-histidine biosynthetic process"/>
    <property type="evidence" value="ECO:0007669"/>
    <property type="project" value="UniProtKB-UniRule"/>
</dbReference>
<dbReference type="CDD" id="cd11534">
    <property type="entry name" value="NTP-PPase_HisIE_like"/>
    <property type="match status" value="1"/>
</dbReference>
<dbReference type="FunFam" id="1.10.287.1080:FF:000002">
    <property type="entry name" value="Histidine biosynthesis bifunctional protein HisIE"/>
    <property type="match status" value="1"/>
</dbReference>
<dbReference type="Gene3D" id="1.10.287.1080">
    <property type="entry name" value="MazG-like"/>
    <property type="match status" value="1"/>
</dbReference>
<dbReference type="HAMAP" id="MF_01020">
    <property type="entry name" value="HisE"/>
    <property type="match status" value="1"/>
</dbReference>
<dbReference type="InterPro" id="IPR008179">
    <property type="entry name" value="HisE"/>
</dbReference>
<dbReference type="InterPro" id="IPR021130">
    <property type="entry name" value="PRib-ATP_PPHydrolase-like"/>
</dbReference>
<dbReference type="NCBIfam" id="TIGR03188">
    <property type="entry name" value="histidine_hisI"/>
    <property type="match status" value="1"/>
</dbReference>
<dbReference type="NCBIfam" id="NF001611">
    <property type="entry name" value="PRK00400.1-3"/>
    <property type="match status" value="1"/>
</dbReference>
<dbReference type="NCBIfam" id="NF001613">
    <property type="entry name" value="PRK00400.1-5"/>
    <property type="match status" value="1"/>
</dbReference>
<dbReference type="PANTHER" id="PTHR42945">
    <property type="entry name" value="HISTIDINE BIOSYNTHESIS BIFUNCTIONAL PROTEIN"/>
    <property type="match status" value="1"/>
</dbReference>
<dbReference type="PANTHER" id="PTHR42945:SF1">
    <property type="entry name" value="HISTIDINE BIOSYNTHESIS BIFUNCTIONAL PROTEIN HIS7"/>
    <property type="match status" value="1"/>
</dbReference>
<dbReference type="Pfam" id="PF01503">
    <property type="entry name" value="PRA-PH"/>
    <property type="match status" value="1"/>
</dbReference>
<dbReference type="SUPFAM" id="SSF101386">
    <property type="entry name" value="all-alpha NTP pyrophosphatases"/>
    <property type="match status" value="1"/>
</dbReference>
<gene>
    <name type="primary">hisE</name>
    <name type="ordered locus">RCAP_rcc01152</name>
</gene>
<reference key="1">
    <citation type="journal article" date="1998" name="J. Bacteriol.">
        <title>Isolation and characterization of Rhodobacter capsulatus mutants affected in cytochrome cbb3 oxidase activity.</title>
        <authorList>
            <person name="Koch H.G."/>
            <person name="Hwang O."/>
            <person name="Daldal F."/>
        </authorList>
    </citation>
    <scope>NUCLEOTIDE SEQUENCE [GENOMIC DNA]</scope>
    <source>
        <strain>MT1131</strain>
    </source>
</reference>
<reference key="2">
    <citation type="journal article" date="2010" name="J. Bacteriol.">
        <title>Complete genome sequence of the photosynthetic purple nonsulfur bacterium Rhodobacter capsulatus SB 1003.</title>
        <authorList>
            <person name="Strnad H."/>
            <person name="Lapidus A."/>
            <person name="Paces J."/>
            <person name="Ulbrich P."/>
            <person name="Vlcek C."/>
            <person name="Paces V."/>
            <person name="Haselkorn R."/>
        </authorList>
    </citation>
    <scope>NUCLEOTIDE SEQUENCE [LARGE SCALE GENOMIC DNA]</scope>
    <source>
        <strain>ATCC BAA-309 / NBRC 16581 / SB1003</strain>
    </source>
</reference>